<dbReference type="EMBL" id="CP000822">
    <property type="protein sequence ID" value="ABV13234.1"/>
    <property type="molecule type" value="Genomic_DNA"/>
</dbReference>
<dbReference type="RefSeq" id="WP_012132966.1">
    <property type="nucleotide sequence ID" value="NC_009792.1"/>
</dbReference>
<dbReference type="SMR" id="A8AIC1"/>
<dbReference type="STRING" id="290338.CKO_02110"/>
<dbReference type="GeneID" id="45136057"/>
<dbReference type="KEGG" id="cko:CKO_02110"/>
<dbReference type="HOGENOM" id="CLU_118972_1_0_6"/>
<dbReference type="OrthoDB" id="6464784at2"/>
<dbReference type="Proteomes" id="UP000008148">
    <property type="component" value="Chromosome"/>
</dbReference>
<dbReference type="GO" id="GO:0000917">
    <property type="term" value="P:division septum assembly"/>
    <property type="evidence" value="ECO:0007669"/>
    <property type="project" value="UniProtKB-KW"/>
</dbReference>
<dbReference type="GO" id="GO:0006281">
    <property type="term" value="P:DNA repair"/>
    <property type="evidence" value="ECO:0007669"/>
    <property type="project" value="TreeGrafter"/>
</dbReference>
<dbReference type="GO" id="GO:0051782">
    <property type="term" value="P:negative regulation of cell division"/>
    <property type="evidence" value="ECO:0007669"/>
    <property type="project" value="UniProtKB-UniRule"/>
</dbReference>
<dbReference type="GO" id="GO:0009432">
    <property type="term" value="P:SOS response"/>
    <property type="evidence" value="ECO:0007669"/>
    <property type="project" value="UniProtKB-UniRule"/>
</dbReference>
<dbReference type="FunFam" id="3.40.50.300:FF:000417">
    <property type="entry name" value="Cell division inhibitor SulA"/>
    <property type="match status" value="1"/>
</dbReference>
<dbReference type="Gene3D" id="3.40.50.300">
    <property type="entry name" value="P-loop containing nucleotide triphosphate hydrolases"/>
    <property type="match status" value="1"/>
</dbReference>
<dbReference type="HAMAP" id="MF_01179">
    <property type="entry name" value="SulA"/>
    <property type="match status" value="1"/>
</dbReference>
<dbReference type="InterPro" id="IPR004596">
    <property type="entry name" value="Cell_div_suppressor_SulA"/>
</dbReference>
<dbReference type="InterPro" id="IPR027417">
    <property type="entry name" value="P-loop_NTPase"/>
</dbReference>
<dbReference type="InterPro" id="IPR050356">
    <property type="entry name" value="SulA_CellDiv_inhibitor"/>
</dbReference>
<dbReference type="InterPro" id="IPR047696">
    <property type="entry name" value="SulA_enterobact"/>
</dbReference>
<dbReference type="NCBIfam" id="NF007892">
    <property type="entry name" value="PRK10595.1"/>
    <property type="match status" value="1"/>
</dbReference>
<dbReference type="NCBIfam" id="TIGR00623">
    <property type="entry name" value="SOS_SulA_coli"/>
    <property type="match status" value="1"/>
</dbReference>
<dbReference type="PANTHER" id="PTHR35369">
    <property type="entry name" value="BLR3025 PROTEIN-RELATED"/>
    <property type="match status" value="1"/>
</dbReference>
<dbReference type="PANTHER" id="PTHR35369:SF4">
    <property type="entry name" value="CELL DIVISION INHIBITOR SULA"/>
    <property type="match status" value="1"/>
</dbReference>
<dbReference type="Pfam" id="PF03846">
    <property type="entry name" value="SulA"/>
    <property type="match status" value="1"/>
</dbReference>
<dbReference type="PIRSF" id="PIRSF003093">
    <property type="entry name" value="SulA"/>
    <property type="match status" value="1"/>
</dbReference>
<dbReference type="SUPFAM" id="SSF52540">
    <property type="entry name" value="P-loop containing nucleoside triphosphate hydrolases"/>
    <property type="match status" value="1"/>
</dbReference>
<feature type="chain" id="PRO_0000343954" description="Cell division inhibitor SulA">
    <location>
        <begin position="1"/>
        <end position="169"/>
    </location>
</feature>
<feature type="region of interest" description="FtsZ binding" evidence="1">
    <location>
        <begin position="106"/>
        <end position="112"/>
    </location>
</feature>
<feature type="region of interest" description="Lon protease binding" evidence="1">
    <location>
        <begin position="162"/>
        <end position="169"/>
    </location>
</feature>
<feature type="site" description="Essential for degradation by Lon protease" evidence="1">
    <location>
        <position position="169"/>
    </location>
</feature>
<gene>
    <name evidence="1" type="primary">sulA</name>
    <name type="ordered locus">CKO_02110</name>
</gene>
<evidence type="ECO:0000255" key="1">
    <source>
        <dbReference type="HAMAP-Rule" id="MF_01179"/>
    </source>
</evidence>
<reference key="1">
    <citation type="submission" date="2007-08" db="EMBL/GenBank/DDBJ databases">
        <authorList>
            <consortium name="The Citrobacter koseri Genome Sequencing Project"/>
            <person name="McClelland M."/>
            <person name="Sanderson E.K."/>
            <person name="Porwollik S."/>
            <person name="Spieth J."/>
            <person name="Clifton W.S."/>
            <person name="Latreille P."/>
            <person name="Courtney L."/>
            <person name="Wang C."/>
            <person name="Pepin K."/>
            <person name="Bhonagiri V."/>
            <person name="Nash W."/>
            <person name="Johnson M."/>
            <person name="Thiruvilangam P."/>
            <person name="Wilson R."/>
        </authorList>
    </citation>
    <scope>NUCLEOTIDE SEQUENCE [LARGE SCALE GENOMIC DNA]</scope>
    <source>
        <strain>ATCC BAA-895 / CDC 4225-83 / SGSC4696</strain>
    </source>
</reference>
<proteinExistence type="inferred from homology"/>
<organism>
    <name type="scientific">Citrobacter koseri (strain ATCC BAA-895 / CDC 4225-83 / SGSC4696)</name>
    <dbReference type="NCBI Taxonomy" id="290338"/>
    <lineage>
        <taxon>Bacteria</taxon>
        <taxon>Pseudomonadati</taxon>
        <taxon>Pseudomonadota</taxon>
        <taxon>Gammaproteobacteria</taxon>
        <taxon>Enterobacterales</taxon>
        <taxon>Enterobacteriaceae</taxon>
        <taxon>Citrobacter</taxon>
    </lineage>
</organism>
<protein>
    <recommendedName>
        <fullName evidence="1">Cell division inhibitor SulA</fullName>
    </recommendedName>
</protein>
<keyword id="KW-0131">Cell cycle</keyword>
<keyword id="KW-0132">Cell division</keyword>
<keyword id="KW-0227">DNA damage</keyword>
<keyword id="KW-1185">Reference proteome</keyword>
<keyword id="KW-0717">Septation</keyword>
<keyword id="KW-0742">SOS response</keyword>
<sequence length="169" mass="18887">MYTSGYANRSSLFSSTAGSIARVSSENTTAGLISEVVYREDQPMMTQLLLLPLLQQLGQQSRWQLWLTPQQKLSREWVQSAGLPLTKVMQISQLSPCHTLESMIRALRTGNYSVVIGWLADELSEEEHTRLAQAADEGNAMGFIMRPVSAHAHATRHHSGLKIHSNLYH</sequence>
<accession>A8AIC1</accession>
<comment type="function">
    <text evidence="1">Component of the SOS system and an inhibitor of cell division. Accumulation of SulA causes rapid cessation of cell division and the appearance of long, non-septate filaments. In the presence of GTP, binds a polymerization-competent form of FtsZ in a 1:1 ratio, thus inhibiting FtsZ polymerization and therefore preventing it from participating in the assembly of the Z ring. This mechanism prevents the premature segregation of damaged DNA to daughter cells during cell division.</text>
</comment>
<comment type="subunit">
    <text evidence="1">Interacts with FtsZ.</text>
</comment>
<comment type="induction">
    <text evidence="1">By DNA damage, as part of the SOS response.</text>
</comment>
<comment type="PTM">
    <text evidence="1">Is rapidly cleaved and degraded by the Lon protease once DNA damage is repaired.</text>
</comment>
<comment type="similarity">
    <text evidence="1">Belongs to the SulA family.</text>
</comment>
<name>SULA_CITK8</name>